<evidence type="ECO:0000255" key="1">
    <source>
        <dbReference type="HAMAP-Rule" id="MF_00337"/>
    </source>
</evidence>
<organism>
    <name type="scientific">Aliivibrio fischeri (strain MJ11)</name>
    <name type="common">Vibrio fischeri</name>
    <dbReference type="NCBI Taxonomy" id="388396"/>
    <lineage>
        <taxon>Bacteria</taxon>
        <taxon>Pseudomonadati</taxon>
        <taxon>Pseudomonadota</taxon>
        <taxon>Gammaproteobacteria</taxon>
        <taxon>Vibrionales</taxon>
        <taxon>Vibrionaceae</taxon>
        <taxon>Aliivibrio</taxon>
    </lineage>
</organism>
<name>EX7S_ALIFM</name>
<accession>B5FBG8</accession>
<reference key="1">
    <citation type="submission" date="2008-08" db="EMBL/GenBank/DDBJ databases">
        <title>Complete sequence of Vibrio fischeri strain MJ11.</title>
        <authorList>
            <person name="Mandel M.J."/>
            <person name="Stabb E.V."/>
            <person name="Ruby E.G."/>
            <person name="Ferriera S."/>
            <person name="Johnson J."/>
            <person name="Kravitz S."/>
            <person name="Beeson K."/>
            <person name="Sutton G."/>
            <person name="Rogers Y.-H."/>
            <person name="Friedman R."/>
            <person name="Frazier M."/>
            <person name="Venter J.C."/>
        </authorList>
    </citation>
    <scope>NUCLEOTIDE SEQUENCE [LARGE SCALE GENOMIC DNA]</scope>
    <source>
        <strain>MJ11</strain>
    </source>
</reference>
<gene>
    <name evidence="1" type="primary">xseB</name>
    <name type="ordered locus">VFMJ11_0733</name>
</gene>
<proteinExistence type="inferred from homology"/>
<comment type="function">
    <text evidence="1">Bidirectionally degrades single-stranded DNA into large acid-insoluble oligonucleotides, which are then degraded further into small acid-soluble oligonucleotides.</text>
</comment>
<comment type="catalytic activity">
    <reaction evidence="1">
        <text>Exonucleolytic cleavage in either 5'- to 3'- or 3'- to 5'-direction to yield nucleoside 5'-phosphates.</text>
        <dbReference type="EC" id="3.1.11.6"/>
    </reaction>
</comment>
<comment type="subunit">
    <text evidence="1">Heterooligomer composed of large and small subunits.</text>
</comment>
<comment type="subcellular location">
    <subcellularLocation>
        <location evidence="1">Cytoplasm</location>
    </subcellularLocation>
</comment>
<comment type="similarity">
    <text evidence="1">Belongs to the XseB family.</text>
</comment>
<keyword id="KW-0963">Cytoplasm</keyword>
<keyword id="KW-0269">Exonuclease</keyword>
<keyword id="KW-0378">Hydrolase</keyword>
<keyword id="KW-0540">Nuclease</keyword>
<feature type="chain" id="PRO_1000119967" description="Exodeoxyribonuclease 7 small subunit">
    <location>
        <begin position="1"/>
        <end position="80"/>
    </location>
</feature>
<dbReference type="EC" id="3.1.11.6" evidence="1"/>
<dbReference type="EMBL" id="CP001139">
    <property type="protein sequence ID" value="ACH65723.1"/>
    <property type="molecule type" value="Genomic_DNA"/>
</dbReference>
<dbReference type="RefSeq" id="WP_005418105.1">
    <property type="nucleotide sequence ID" value="NC_011184.1"/>
</dbReference>
<dbReference type="SMR" id="B5FBG8"/>
<dbReference type="GeneID" id="54163368"/>
<dbReference type="KEGG" id="vfm:VFMJ11_0733"/>
<dbReference type="HOGENOM" id="CLU_145918_3_3_6"/>
<dbReference type="Proteomes" id="UP000001857">
    <property type="component" value="Chromosome I"/>
</dbReference>
<dbReference type="GO" id="GO:0005829">
    <property type="term" value="C:cytosol"/>
    <property type="evidence" value="ECO:0007669"/>
    <property type="project" value="TreeGrafter"/>
</dbReference>
<dbReference type="GO" id="GO:0009318">
    <property type="term" value="C:exodeoxyribonuclease VII complex"/>
    <property type="evidence" value="ECO:0007669"/>
    <property type="project" value="InterPro"/>
</dbReference>
<dbReference type="GO" id="GO:0008855">
    <property type="term" value="F:exodeoxyribonuclease VII activity"/>
    <property type="evidence" value="ECO:0007669"/>
    <property type="project" value="UniProtKB-UniRule"/>
</dbReference>
<dbReference type="GO" id="GO:0006308">
    <property type="term" value="P:DNA catabolic process"/>
    <property type="evidence" value="ECO:0007669"/>
    <property type="project" value="UniProtKB-UniRule"/>
</dbReference>
<dbReference type="Gene3D" id="1.10.287.1040">
    <property type="entry name" value="Exonuclease VII, small subunit"/>
    <property type="match status" value="1"/>
</dbReference>
<dbReference type="HAMAP" id="MF_00337">
    <property type="entry name" value="Exonuc_7_S"/>
    <property type="match status" value="1"/>
</dbReference>
<dbReference type="InterPro" id="IPR003761">
    <property type="entry name" value="Exonuc_VII_S"/>
</dbReference>
<dbReference type="InterPro" id="IPR037004">
    <property type="entry name" value="Exonuc_VII_ssu_sf"/>
</dbReference>
<dbReference type="NCBIfam" id="NF002137">
    <property type="entry name" value="PRK00977.1-1"/>
    <property type="match status" value="1"/>
</dbReference>
<dbReference type="NCBIfam" id="NF002140">
    <property type="entry name" value="PRK00977.1-4"/>
    <property type="match status" value="1"/>
</dbReference>
<dbReference type="NCBIfam" id="TIGR01280">
    <property type="entry name" value="xseB"/>
    <property type="match status" value="1"/>
</dbReference>
<dbReference type="PANTHER" id="PTHR34137">
    <property type="entry name" value="EXODEOXYRIBONUCLEASE 7 SMALL SUBUNIT"/>
    <property type="match status" value="1"/>
</dbReference>
<dbReference type="PANTHER" id="PTHR34137:SF1">
    <property type="entry name" value="EXODEOXYRIBONUCLEASE 7 SMALL SUBUNIT"/>
    <property type="match status" value="1"/>
</dbReference>
<dbReference type="Pfam" id="PF02609">
    <property type="entry name" value="Exonuc_VII_S"/>
    <property type="match status" value="1"/>
</dbReference>
<dbReference type="PIRSF" id="PIRSF006488">
    <property type="entry name" value="Exonuc_VII_S"/>
    <property type="match status" value="1"/>
</dbReference>
<dbReference type="SUPFAM" id="SSF116842">
    <property type="entry name" value="XseB-like"/>
    <property type="match status" value="1"/>
</dbReference>
<protein>
    <recommendedName>
        <fullName evidence="1">Exodeoxyribonuclease 7 small subunit</fullName>
        <ecNumber evidence="1">3.1.11.6</ecNumber>
    </recommendedName>
    <alternativeName>
        <fullName evidence="1">Exodeoxyribonuclease VII small subunit</fullName>
        <shortName evidence="1">Exonuclease VII small subunit</shortName>
    </alternativeName>
</protein>
<sequence>MAVKKPENLSFEAAIEELDSVVNQLESGDLPLEDALKKFERGISLARAGQEKLTQAEQRVEILLQADDNAELTPFDGQDD</sequence>